<sequence length="940" mass="107163">MAFNKLESSNNQEIISEEVGILKELLDDATRGMAGEQGLTTIQHLVELYDEGDYEALTQAISEMTNDDMVFASRYFSLLPLLINISEDVDLAYEVNRKNNIDESYLGKLSETFDVVAESDNARDILENVNVVPVLTAHPTQVQRKTMLELTNHIHELLRKHRDVKDGLINKDKWYADLRRYVEIMMKTDIIREKKLKVKNEITNVMEYYNSSLIKAITKLSHEFKRLAVEKGIELDNPTPITMGMWIGGDRDGNPFVTAETLKLSATLQSEVILNYYIEKVDNLYRSFSLSSRLTEVSETVAEMAKLSPDTSVYRENEPYRRAFSYIQSKLIQTLLFFKAGNFSNERAAKRLSENVRLGSVSTGEVVADFVHDRLSQSLQAVSQQTTEFYETAEAFHDDLLAIKNSLLENDDSVLISGDFEELLQAVEVFGFYLATIDMRQDSSVHEACVAELLKSANIVDNYSELTEVEKVAVLLKELQEDPRTLSSTNVSKSETLEKELAIFRTARLLKDYLGEEVIKQHIISHTESVSDMFELAILLKEVGLVDTERARVQIVPLFETIEDLENSNEIMKQYLGYDIVKRWIKNSNNYQEIMLGYSDSNKDGGYLSSGWTLYKAQNELTNIGEERGIKITFFHGRGGTVGRGGGPSYDAITSQPFGTIKDRIRLTEQGEVIGNKYGNKDAAYYNLEMLVSATLDRMVTRQITDPDELVDFREIMDSIVQDSNRIYRDLVFGNEHFYDYFFEASPIKEVSSLNIGSRPAARKTITDISGLRAIPWVFSWSQNRIMLPGWYGVGSAFNHYIEAEEGNLEKLQHMFETWPFFRSLLSNVDMVLSKSDMNIAFHYAQLAESEEVRSVFNIILDEWQLTKNVILAIEKHDDFLEESPSLKASLGFRLPYFNVLNYIQIELIKRLRNNNLTDDEISLIHITINGIATGLRNSG</sequence>
<comment type="function">
    <text evidence="1">Forms oxaloacetate, a four-carbon dicarboxylic acid source for the tricarboxylic acid cycle.</text>
</comment>
<comment type="catalytic activity">
    <reaction evidence="1">
        <text>oxaloacetate + phosphate = phosphoenolpyruvate + hydrogencarbonate</text>
        <dbReference type="Rhea" id="RHEA:28370"/>
        <dbReference type="ChEBI" id="CHEBI:16452"/>
        <dbReference type="ChEBI" id="CHEBI:17544"/>
        <dbReference type="ChEBI" id="CHEBI:43474"/>
        <dbReference type="ChEBI" id="CHEBI:58702"/>
        <dbReference type="EC" id="4.1.1.31"/>
    </reaction>
</comment>
<comment type="cofactor">
    <cofactor evidence="1">
        <name>Mg(2+)</name>
        <dbReference type="ChEBI" id="CHEBI:18420"/>
    </cofactor>
</comment>
<comment type="similarity">
    <text evidence="1">Belongs to the PEPCase type 1 family.</text>
</comment>
<reference key="1">
    <citation type="journal article" date="2004" name="Nat. Biotechnol.">
        <title>Complete sequence and comparative genome analysis of the dairy bacterium Streptococcus thermophilus.</title>
        <authorList>
            <person name="Bolotin A."/>
            <person name="Quinquis B."/>
            <person name="Renault P."/>
            <person name="Sorokin A."/>
            <person name="Ehrlich S.D."/>
            <person name="Kulakauskas S."/>
            <person name="Lapidus A."/>
            <person name="Goltsman E."/>
            <person name="Mazur M."/>
            <person name="Pusch G.D."/>
            <person name="Fonstein M."/>
            <person name="Overbeek R."/>
            <person name="Kyprides N."/>
            <person name="Purnelle B."/>
            <person name="Prozzi D."/>
            <person name="Ngui K."/>
            <person name="Masuy D."/>
            <person name="Hancy F."/>
            <person name="Burteau S."/>
            <person name="Boutry M."/>
            <person name="Delcour J."/>
            <person name="Goffeau A."/>
            <person name="Hols P."/>
        </authorList>
    </citation>
    <scope>NUCLEOTIDE SEQUENCE [LARGE SCALE GENOMIC DNA]</scope>
    <source>
        <strain>CNRZ 1066</strain>
    </source>
</reference>
<gene>
    <name evidence="1" type="primary">ppc</name>
    <name type="ordered locus">str0718</name>
</gene>
<organism>
    <name type="scientific">Streptococcus thermophilus (strain CNRZ 1066)</name>
    <dbReference type="NCBI Taxonomy" id="299768"/>
    <lineage>
        <taxon>Bacteria</taxon>
        <taxon>Bacillati</taxon>
        <taxon>Bacillota</taxon>
        <taxon>Bacilli</taxon>
        <taxon>Lactobacillales</taxon>
        <taxon>Streptococcaceae</taxon>
        <taxon>Streptococcus</taxon>
    </lineage>
</organism>
<feature type="chain" id="PRO_0000166636" description="Phosphoenolpyruvate carboxylase">
    <location>
        <begin position="1"/>
        <end position="940"/>
    </location>
</feature>
<feature type="active site" evidence="1">
    <location>
        <position position="138"/>
    </location>
</feature>
<feature type="active site" evidence="1">
    <location>
        <position position="603"/>
    </location>
</feature>
<keyword id="KW-0120">Carbon dioxide fixation</keyword>
<keyword id="KW-0456">Lyase</keyword>
<keyword id="KW-0460">Magnesium</keyword>
<evidence type="ECO:0000255" key="1">
    <source>
        <dbReference type="HAMAP-Rule" id="MF_00595"/>
    </source>
</evidence>
<name>CAPP_STRT1</name>
<proteinExistence type="inferred from homology"/>
<protein>
    <recommendedName>
        <fullName evidence="1">Phosphoenolpyruvate carboxylase</fullName>
        <shortName evidence="1">PEPC</shortName>
        <shortName evidence="1">PEPCase</shortName>
        <ecNumber evidence="1">4.1.1.31</ecNumber>
    </recommendedName>
</protein>
<accession>Q5M0E6</accession>
<dbReference type="EC" id="4.1.1.31" evidence="1"/>
<dbReference type="EMBL" id="CP000024">
    <property type="protein sequence ID" value="AAV62313.1"/>
    <property type="molecule type" value="Genomic_DNA"/>
</dbReference>
<dbReference type="RefSeq" id="WP_011227066.1">
    <property type="nucleotide sequence ID" value="NC_006449.1"/>
</dbReference>
<dbReference type="SMR" id="Q5M0E6"/>
<dbReference type="KEGG" id="stc:str0718"/>
<dbReference type="HOGENOM" id="CLU_006557_2_0_9"/>
<dbReference type="GO" id="GO:0005829">
    <property type="term" value="C:cytosol"/>
    <property type="evidence" value="ECO:0007669"/>
    <property type="project" value="TreeGrafter"/>
</dbReference>
<dbReference type="GO" id="GO:0000287">
    <property type="term" value="F:magnesium ion binding"/>
    <property type="evidence" value="ECO:0007669"/>
    <property type="project" value="UniProtKB-UniRule"/>
</dbReference>
<dbReference type="GO" id="GO:0008964">
    <property type="term" value="F:phosphoenolpyruvate carboxylase activity"/>
    <property type="evidence" value="ECO:0007669"/>
    <property type="project" value="UniProtKB-UniRule"/>
</dbReference>
<dbReference type="GO" id="GO:0015977">
    <property type="term" value="P:carbon fixation"/>
    <property type="evidence" value="ECO:0007669"/>
    <property type="project" value="UniProtKB-UniRule"/>
</dbReference>
<dbReference type="GO" id="GO:0006107">
    <property type="term" value="P:oxaloacetate metabolic process"/>
    <property type="evidence" value="ECO:0007669"/>
    <property type="project" value="UniProtKB-UniRule"/>
</dbReference>
<dbReference type="GO" id="GO:0006099">
    <property type="term" value="P:tricarboxylic acid cycle"/>
    <property type="evidence" value="ECO:0007669"/>
    <property type="project" value="InterPro"/>
</dbReference>
<dbReference type="Gene3D" id="1.20.1440.90">
    <property type="entry name" value="Phosphoenolpyruvate/pyruvate domain"/>
    <property type="match status" value="1"/>
</dbReference>
<dbReference type="HAMAP" id="MF_00595">
    <property type="entry name" value="PEPcase_type1"/>
    <property type="match status" value="1"/>
</dbReference>
<dbReference type="InterPro" id="IPR021135">
    <property type="entry name" value="PEP_COase"/>
</dbReference>
<dbReference type="InterPro" id="IPR022805">
    <property type="entry name" value="PEP_COase_bac/pln-type"/>
</dbReference>
<dbReference type="InterPro" id="IPR018129">
    <property type="entry name" value="PEP_COase_Lys_AS"/>
</dbReference>
<dbReference type="InterPro" id="IPR033129">
    <property type="entry name" value="PEPCASE_His_AS"/>
</dbReference>
<dbReference type="InterPro" id="IPR015813">
    <property type="entry name" value="Pyrv/PenolPyrv_kinase-like_dom"/>
</dbReference>
<dbReference type="NCBIfam" id="NF000584">
    <property type="entry name" value="PRK00009.1"/>
    <property type="match status" value="1"/>
</dbReference>
<dbReference type="PANTHER" id="PTHR30523">
    <property type="entry name" value="PHOSPHOENOLPYRUVATE CARBOXYLASE"/>
    <property type="match status" value="1"/>
</dbReference>
<dbReference type="PANTHER" id="PTHR30523:SF6">
    <property type="entry name" value="PHOSPHOENOLPYRUVATE CARBOXYLASE"/>
    <property type="match status" value="1"/>
</dbReference>
<dbReference type="Pfam" id="PF00311">
    <property type="entry name" value="PEPcase"/>
    <property type="match status" value="1"/>
</dbReference>
<dbReference type="PRINTS" id="PR00150">
    <property type="entry name" value="PEPCARBXLASE"/>
</dbReference>
<dbReference type="SUPFAM" id="SSF51621">
    <property type="entry name" value="Phosphoenolpyruvate/pyruvate domain"/>
    <property type="match status" value="1"/>
</dbReference>
<dbReference type="PROSITE" id="PS00781">
    <property type="entry name" value="PEPCASE_1"/>
    <property type="match status" value="1"/>
</dbReference>
<dbReference type="PROSITE" id="PS00393">
    <property type="entry name" value="PEPCASE_2"/>
    <property type="match status" value="1"/>
</dbReference>